<protein>
    <recommendedName>
        <fullName evidence="2">Glutarate-semialdehyde dehydrogenase</fullName>
        <ecNumber evidence="2">1.2.1.-</ecNumber>
    </recommendedName>
</protein>
<accession>Q88RC0</accession>
<accession>Q93G47</accession>
<reference key="1">
    <citation type="journal article" date="2002" name="Environ. Microbiol.">
        <title>Complete genome sequence and comparative analysis of the metabolically versatile Pseudomonas putida KT2440.</title>
        <authorList>
            <person name="Nelson K.E."/>
            <person name="Weinel C."/>
            <person name="Paulsen I.T."/>
            <person name="Dodson R.J."/>
            <person name="Hilbert H."/>
            <person name="Martins dos Santos V.A.P."/>
            <person name="Fouts D.E."/>
            <person name="Gill S.R."/>
            <person name="Pop M."/>
            <person name="Holmes M."/>
            <person name="Brinkac L.M."/>
            <person name="Beanan M.J."/>
            <person name="DeBoy R.T."/>
            <person name="Daugherty S.C."/>
            <person name="Kolonay J.F."/>
            <person name="Madupu R."/>
            <person name="Nelson W.C."/>
            <person name="White O."/>
            <person name="Peterson J.D."/>
            <person name="Khouri H.M."/>
            <person name="Hance I."/>
            <person name="Chris Lee P."/>
            <person name="Holtzapple E.K."/>
            <person name="Scanlan D."/>
            <person name="Tran K."/>
            <person name="Moazzez A."/>
            <person name="Utterback T.R."/>
            <person name="Rizzo M."/>
            <person name="Lee K."/>
            <person name="Kosack D."/>
            <person name="Moestl D."/>
            <person name="Wedler H."/>
            <person name="Lauber J."/>
            <person name="Stjepandic D."/>
            <person name="Hoheisel J."/>
            <person name="Straetz M."/>
            <person name="Heim S."/>
            <person name="Kiewitz C."/>
            <person name="Eisen J.A."/>
            <person name="Timmis K.N."/>
            <person name="Duesterhoeft A."/>
            <person name="Tuemmler B."/>
            <person name="Fraser C.M."/>
        </authorList>
    </citation>
    <scope>NUCLEOTIDE SEQUENCE [LARGE SCALE GENOMIC DNA]</scope>
    <source>
        <strain>ATCC 47054 / DSM 6125 / CFBP 8728 / NCIMB 11950 / KT2440</strain>
    </source>
</reference>
<reference key="2">
    <citation type="journal article" date="2001" name="Appl. Environ. Microbiol.">
        <title>Expression of a Pseudomonas putida aminotransferase involved in lysine catabolism is induced in the rhizosphere.</title>
        <authorList>
            <person name="Espinosa-Urgel M."/>
            <person name="Ramos J.L."/>
        </authorList>
    </citation>
    <scope>NUCLEOTIDE SEQUENCE [GENOMIC DNA] OF 312-480</scope>
    <scope>GENE NAME</scope>
    <source>
        <strain>ATCC 47054 / DSM 6125 / CFBP 8728 / NCIMB 11950 / KT2440</strain>
    </source>
</reference>
<sequence>MQLKDAQLFRQQAYINGEWLDADNGQTIKVTNPATGEVIGTVPKMGTAETRRAIEAADKALPAWRALTAKERSAKLRRWFELMIENQDDLARLMTTEQGKPLAEAKGEIAYAASFIEWFAEEAKRIYGDTIPGHQPDKRLIVIKQPIGVTAAITPWNFPAAMITRKAGPALAAGCTMVLKPASQTPYSALALVELAHRAGIPAGVLSVVTGSAGEVGGELTGNSLVRKLSFTGSTEIGRQLMEECAKDIKKVSLELGGNAPFIVFDDADLDKAVEGAIISKYRNNGQTCVCANRIYVQDGVYDAFAEKLAAAVAKLKIGNGLEEGTTTGPLIDGKAVAKVQEHIEDAVSKGAKVLSGGKLIEGNFFEPTILVDVPKTAAVAKEETFGPLAPLFRFKDEAEVIAMSNDTEFGLASYFYARDMSRVFRVAEALEYGMVGINTGLISNEVAPFGGIKASGLGREGSKYGIEDYLEIKYLCISV</sequence>
<dbReference type="EC" id="1.2.1.-" evidence="2"/>
<dbReference type="EMBL" id="AE015451">
    <property type="protein sequence ID" value="AAN65845.1"/>
    <property type="molecule type" value="Genomic_DNA"/>
</dbReference>
<dbReference type="EMBL" id="AF299291">
    <property type="protein sequence ID" value="AAK97867.1"/>
    <property type="molecule type" value="Genomic_DNA"/>
</dbReference>
<dbReference type="RefSeq" id="NP_742381.1">
    <property type="nucleotide sequence ID" value="NC_002947.4"/>
</dbReference>
<dbReference type="SMR" id="Q88RC0"/>
<dbReference type="STRING" id="160488.PP_0213"/>
<dbReference type="PaxDb" id="160488-PP_0213"/>
<dbReference type="KEGG" id="ppu:PP_0213"/>
<dbReference type="PATRIC" id="fig|160488.4.peg.227"/>
<dbReference type="eggNOG" id="COG1012">
    <property type="taxonomic scope" value="Bacteria"/>
</dbReference>
<dbReference type="HOGENOM" id="CLU_005391_5_1_6"/>
<dbReference type="OrthoDB" id="9812625at2"/>
<dbReference type="PhylomeDB" id="Q88RC0"/>
<dbReference type="BioCyc" id="PPUT160488:G1G01-234-MONOMER"/>
<dbReference type="BRENDA" id="1.2.1.20">
    <property type="organism ID" value="5092"/>
</dbReference>
<dbReference type="Proteomes" id="UP000000556">
    <property type="component" value="Chromosome"/>
</dbReference>
<dbReference type="GO" id="GO:0005829">
    <property type="term" value="C:cytosol"/>
    <property type="evidence" value="ECO:0007669"/>
    <property type="project" value="TreeGrafter"/>
</dbReference>
<dbReference type="GO" id="GO:0102810">
    <property type="term" value="F:glutarate-semialdehyde dehydrogenase (NADP+) activity"/>
    <property type="evidence" value="ECO:0000250"/>
    <property type="project" value="UniProtKB"/>
</dbReference>
<dbReference type="GO" id="GO:0004777">
    <property type="term" value="F:succinate-semialdehyde dehydrogenase (NAD+) activity"/>
    <property type="evidence" value="ECO:0007669"/>
    <property type="project" value="TreeGrafter"/>
</dbReference>
<dbReference type="GO" id="GO:0009450">
    <property type="term" value="P:gamma-aminobutyric acid catabolic process"/>
    <property type="evidence" value="ECO:0007669"/>
    <property type="project" value="InterPro"/>
</dbReference>
<dbReference type="GO" id="GO:0019477">
    <property type="term" value="P:L-lysine catabolic process"/>
    <property type="evidence" value="ECO:0000250"/>
    <property type="project" value="UniProtKB"/>
</dbReference>
<dbReference type="CDD" id="cd07103">
    <property type="entry name" value="ALDH_F5_SSADH_GabD"/>
    <property type="match status" value="1"/>
</dbReference>
<dbReference type="FunFam" id="3.40.309.10:FF:000004">
    <property type="entry name" value="Succinate-semialdehyde dehydrogenase I"/>
    <property type="match status" value="1"/>
</dbReference>
<dbReference type="FunFam" id="3.40.605.10:FF:000005">
    <property type="entry name" value="Succinate-semialdehyde dehydrogenase I"/>
    <property type="match status" value="1"/>
</dbReference>
<dbReference type="Gene3D" id="3.40.605.10">
    <property type="entry name" value="Aldehyde Dehydrogenase, Chain A, domain 1"/>
    <property type="match status" value="1"/>
</dbReference>
<dbReference type="Gene3D" id="3.40.309.10">
    <property type="entry name" value="Aldehyde Dehydrogenase, Chain A, domain 2"/>
    <property type="match status" value="1"/>
</dbReference>
<dbReference type="InterPro" id="IPR016161">
    <property type="entry name" value="Ald_DH/histidinol_DH"/>
</dbReference>
<dbReference type="InterPro" id="IPR016163">
    <property type="entry name" value="Ald_DH_C"/>
</dbReference>
<dbReference type="InterPro" id="IPR016160">
    <property type="entry name" value="Ald_DH_CS_CYS"/>
</dbReference>
<dbReference type="InterPro" id="IPR029510">
    <property type="entry name" value="Ald_DH_CS_GLU"/>
</dbReference>
<dbReference type="InterPro" id="IPR016162">
    <property type="entry name" value="Ald_DH_N"/>
</dbReference>
<dbReference type="InterPro" id="IPR015590">
    <property type="entry name" value="Aldehyde_DH_dom"/>
</dbReference>
<dbReference type="InterPro" id="IPR050740">
    <property type="entry name" value="Aldehyde_DH_Superfamily"/>
</dbReference>
<dbReference type="InterPro" id="IPR010102">
    <property type="entry name" value="Succ_semiAld_DH"/>
</dbReference>
<dbReference type="NCBIfam" id="NF008415">
    <property type="entry name" value="PRK11241.1"/>
    <property type="match status" value="1"/>
</dbReference>
<dbReference type="NCBIfam" id="TIGR01780">
    <property type="entry name" value="SSADH"/>
    <property type="match status" value="1"/>
</dbReference>
<dbReference type="PANTHER" id="PTHR43353">
    <property type="entry name" value="SUCCINATE-SEMIALDEHYDE DEHYDROGENASE, MITOCHONDRIAL"/>
    <property type="match status" value="1"/>
</dbReference>
<dbReference type="PANTHER" id="PTHR43353:SF5">
    <property type="entry name" value="SUCCINATE-SEMIALDEHYDE DEHYDROGENASE, MITOCHONDRIAL"/>
    <property type="match status" value="1"/>
</dbReference>
<dbReference type="Pfam" id="PF00171">
    <property type="entry name" value="Aldedh"/>
    <property type="match status" value="1"/>
</dbReference>
<dbReference type="SUPFAM" id="SSF53720">
    <property type="entry name" value="ALDH-like"/>
    <property type="match status" value="1"/>
</dbReference>
<dbReference type="PROSITE" id="PS00070">
    <property type="entry name" value="ALDEHYDE_DEHYDR_CYS"/>
    <property type="match status" value="1"/>
</dbReference>
<dbReference type="PROSITE" id="PS00687">
    <property type="entry name" value="ALDEHYDE_DEHYDR_GLU"/>
    <property type="match status" value="1"/>
</dbReference>
<organism>
    <name type="scientific">Pseudomonas putida (strain ATCC 47054 / DSM 6125 / CFBP 8728 / NCIMB 11950 / KT2440)</name>
    <dbReference type="NCBI Taxonomy" id="160488"/>
    <lineage>
        <taxon>Bacteria</taxon>
        <taxon>Pseudomonadati</taxon>
        <taxon>Pseudomonadota</taxon>
        <taxon>Gammaproteobacteria</taxon>
        <taxon>Pseudomonadales</taxon>
        <taxon>Pseudomonadaceae</taxon>
        <taxon>Pseudomonas</taxon>
    </lineage>
</organism>
<keyword id="KW-0521">NADP</keyword>
<keyword id="KW-0560">Oxidoreductase</keyword>
<keyword id="KW-1185">Reference proteome</keyword>
<comment type="function">
    <text evidence="2">Catalyzes the conversion of 5-oxopentanoate (glutarate semialdehyde) to glutarate. Involved in L-lysine degradation.</text>
</comment>
<comment type="catalytic activity">
    <reaction evidence="2">
        <text>5-oxopentanoate + NADP(+) + H2O = glutarate + NADPH + 2 H(+)</text>
        <dbReference type="Rhea" id="RHEA:57832"/>
        <dbReference type="ChEBI" id="CHEBI:15377"/>
        <dbReference type="ChEBI" id="CHEBI:15378"/>
        <dbReference type="ChEBI" id="CHEBI:16120"/>
        <dbReference type="ChEBI" id="CHEBI:30921"/>
        <dbReference type="ChEBI" id="CHEBI:57783"/>
        <dbReference type="ChEBI" id="CHEBI:58349"/>
    </reaction>
</comment>
<comment type="pathway">
    <text evidence="2">Amino-acid degradation.</text>
</comment>
<comment type="similarity">
    <text evidence="6">Belongs to the aldehyde dehydrogenase family.</text>
</comment>
<evidence type="ECO:0000250" key="1"/>
<evidence type="ECO:0000250" key="2">
    <source>
        <dbReference type="UniProtKB" id="Q9I6M5"/>
    </source>
</evidence>
<evidence type="ECO:0000255" key="3">
    <source>
        <dbReference type="PROSITE-ProRule" id="PRU10007"/>
    </source>
</evidence>
<evidence type="ECO:0000255" key="4">
    <source>
        <dbReference type="PROSITE-ProRule" id="PRU10008"/>
    </source>
</evidence>
<evidence type="ECO:0000303" key="5">
    <source>
    </source>
</evidence>
<evidence type="ECO:0000305" key="6"/>
<proteinExistence type="inferred from homology"/>
<gene>
    <name evidence="5" type="primary">davD</name>
    <name type="ordered locus">PP_0213</name>
</gene>
<name>DAVD_PSEPK</name>
<feature type="chain" id="PRO_0000418393" description="Glutarate-semialdehyde dehydrogenase">
    <location>
        <begin position="1"/>
        <end position="480"/>
    </location>
</feature>
<feature type="active site" description="Proton acceptor" evidence="3 4">
    <location>
        <position position="255"/>
    </location>
</feature>
<feature type="active site" description="Nucleophile" evidence="3 4">
    <location>
        <position position="289"/>
    </location>
</feature>
<feature type="binding site" evidence="1">
    <location>
        <begin position="156"/>
        <end position="157"/>
    </location>
    <ligand>
        <name>NADP(+)</name>
        <dbReference type="ChEBI" id="CHEBI:58349"/>
    </ligand>
</feature>
<feature type="binding site" evidence="1">
    <location>
        <begin position="180"/>
        <end position="183"/>
    </location>
    <ligand>
        <name>NADP(+)</name>
        <dbReference type="ChEBI" id="CHEBI:58349"/>
    </ligand>
</feature>
<feature type="binding site" evidence="1">
    <location>
        <begin position="233"/>
        <end position="234"/>
    </location>
    <ligand>
        <name>NADP(+)</name>
        <dbReference type="ChEBI" id="CHEBI:58349"/>
    </ligand>
</feature>
<feature type="binding site" evidence="1">
    <location>
        <position position="256"/>
    </location>
    <ligand>
        <name>NADP(+)</name>
        <dbReference type="ChEBI" id="CHEBI:58349"/>
    </ligand>
</feature>
<feature type="binding site" evidence="1">
    <location>
        <position position="384"/>
    </location>
    <ligand>
        <name>NADP(+)</name>
        <dbReference type="ChEBI" id="CHEBI:58349"/>
    </ligand>
</feature>